<keyword id="KW-0240">DNA-directed RNA polymerase</keyword>
<keyword id="KW-0460">Magnesium</keyword>
<keyword id="KW-0479">Metal-binding</keyword>
<keyword id="KW-0548">Nucleotidyltransferase</keyword>
<keyword id="KW-1185">Reference proteome</keyword>
<keyword id="KW-0804">Transcription</keyword>
<keyword id="KW-0808">Transferase</keyword>
<keyword id="KW-0862">Zinc</keyword>
<gene>
    <name evidence="1" type="primary">rpoC</name>
    <name type="ordered locus">CE0498</name>
</gene>
<evidence type="ECO:0000255" key="1">
    <source>
        <dbReference type="HAMAP-Rule" id="MF_01322"/>
    </source>
</evidence>
<feature type="chain" id="PRO_0000067736" description="DNA-directed RNA polymerase subunit beta'">
    <location>
        <begin position="1"/>
        <end position="1333"/>
    </location>
</feature>
<feature type="binding site" evidence="1">
    <location>
        <position position="60"/>
    </location>
    <ligand>
        <name>Zn(2+)</name>
        <dbReference type="ChEBI" id="CHEBI:29105"/>
        <label>1</label>
    </ligand>
</feature>
<feature type="binding site" evidence="1">
    <location>
        <position position="62"/>
    </location>
    <ligand>
        <name>Zn(2+)</name>
        <dbReference type="ChEBI" id="CHEBI:29105"/>
        <label>1</label>
    </ligand>
</feature>
<feature type="binding site" evidence="1">
    <location>
        <position position="75"/>
    </location>
    <ligand>
        <name>Zn(2+)</name>
        <dbReference type="ChEBI" id="CHEBI:29105"/>
        <label>1</label>
    </ligand>
</feature>
<feature type="binding site" evidence="1">
    <location>
        <position position="78"/>
    </location>
    <ligand>
        <name>Zn(2+)</name>
        <dbReference type="ChEBI" id="CHEBI:29105"/>
        <label>1</label>
    </ligand>
</feature>
<feature type="binding site" evidence="1">
    <location>
        <position position="535"/>
    </location>
    <ligand>
        <name>Mg(2+)</name>
        <dbReference type="ChEBI" id="CHEBI:18420"/>
    </ligand>
</feature>
<feature type="binding site" evidence="1">
    <location>
        <position position="537"/>
    </location>
    <ligand>
        <name>Mg(2+)</name>
        <dbReference type="ChEBI" id="CHEBI:18420"/>
    </ligand>
</feature>
<feature type="binding site" evidence="1">
    <location>
        <position position="539"/>
    </location>
    <ligand>
        <name>Mg(2+)</name>
        <dbReference type="ChEBI" id="CHEBI:18420"/>
    </ligand>
</feature>
<feature type="binding site" evidence="1">
    <location>
        <position position="901"/>
    </location>
    <ligand>
        <name>Zn(2+)</name>
        <dbReference type="ChEBI" id="CHEBI:29105"/>
        <label>2</label>
    </ligand>
</feature>
<feature type="binding site" evidence="1">
    <location>
        <position position="983"/>
    </location>
    <ligand>
        <name>Zn(2+)</name>
        <dbReference type="ChEBI" id="CHEBI:29105"/>
        <label>2</label>
    </ligand>
</feature>
<feature type="binding site" evidence="1">
    <location>
        <position position="990"/>
    </location>
    <ligand>
        <name>Zn(2+)</name>
        <dbReference type="ChEBI" id="CHEBI:29105"/>
        <label>2</label>
    </ligand>
</feature>
<feature type="binding site" evidence="1">
    <location>
        <position position="993"/>
    </location>
    <ligand>
        <name>Zn(2+)</name>
        <dbReference type="ChEBI" id="CHEBI:29105"/>
        <label>2</label>
    </ligand>
</feature>
<accession>Q8FS96</accession>
<proteinExistence type="inferred from homology"/>
<name>RPOC_COREF</name>
<organism>
    <name type="scientific">Corynebacterium efficiens (strain DSM 44549 / YS-314 / AJ 12310 / JCM 11189 / NBRC 100395)</name>
    <dbReference type="NCBI Taxonomy" id="196164"/>
    <lineage>
        <taxon>Bacteria</taxon>
        <taxon>Bacillati</taxon>
        <taxon>Actinomycetota</taxon>
        <taxon>Actinomycetes</taxon>
        <taxon>Mycobacteriales</taxon>
        <taxon>Corynebacteriaceae</taxon>
        <taxon>Corynebacterium</taxon>
    </lineage>
</organism>
<reference key="1">
    <citation type="journal article" date="2003" name="Genome Res.">
        <title>Comparative complete genome sequence analysis of the amino acid replacements responsible for the thermostability of Corynebacterium efficiens.</title>
        <authorList>
            <person name="Nishio Y."/>
            <person name="Nakamura Y."/>
            <person name="Kawarabayasi Y."/>
            <person name="Usuda Y."/>
            <person name="Kimura E."/>
            <person name="Sugimoto S."/>
            <person name="Matsui K."/>
            <person name="Yamagishi A."/>
            <person name="Kikuchi H."/>
            <person name="Ikeo K."/>
            <person name="Gojobori T."/>
        </authorList>
    </citation>
    <scope>NUCLEOTIDE SEQUENCE [LARGE SCALE GENOMIC DNA]</scope>
    <source>
        <strain>DSM 44549 / YS-314 / AJ 12310 / JCM 11189 / NBRC 100395</strain>
    </source>
</reference>
<comment type="function">
    <text evidence="1">DNA-dependent RNA polymerase catalyzes the transcription of DNA into RNA using the four ribonucleoside triphosphates as substrates.</text>
</comment>
<comment type="catalytic activity">
    <reaction evidence="1">
        <text>RNA(n) + a ribonucleoside 5'-triphosphate = RNA(n+1) + diphosphate</text>
        <dbReference type="Rhea" id="RHEA:21248"/>
        <dbReference type="Rhea" id="RHEA-COMP:14527"/>
        <dbReference type="Rhea" id="RHEA-COMP:17342"/>
        <dbReference type="ChEBI" id="CHEBI:33019"/>
        <dbReference type="ChEBI" id="CHEBI:61557"/>
        <dbReference type="ChEBI" id="CHEBI:140395"/>
        <dbReference type="EC" id="2.7.7.6"/>
    </reaction>
</comment>
<comment type="cofactor">
    <cofactor evidence="1">
        <name>Mg(2+)</name>
        <dbReference type="ChEBI" id="CHEBI:18420"/>
    </cofactor>
    <text evidence="1">Binds 1 Mg(2+) ion per subunit.</text>
</comment>
<comment type="cofactor">
    <cofactor evidence="1">
        <name>Zn(2+)</name>
        <dbReference type="ChEBI" id="CHEBI:29105"/>
    </cofactor>
    <text evidence="1">Binds 2 Zn(2+) ions per subunit.</text>
</comment>
<comment type="subunit">
    <text evidence="1">The RNAP catalytic core consists of 2 alpha, 1 beta, 1 beta' and 1 omega subunit. When a sigma factor is associated with the core the holoenzyme is formed, which can initiate transcription.</text>
</comment>
<comment type="similarity">
    <text evidence="1">Belongs to the RNA polymerase beta' chain family.</text>
</comment>
<sequence length="1333" mass="147460">MLDVNVFDELRIGLATADDIRRWSKGEVKKPETINYRTLKPEKDGLFCERIFGPTRDWECACGKYKRVRYKGIICERCGVEVTKSKVRRERMGHIELAAPVTHIWYFKGVPSRLGYLLDLAPKDLDLIIYFGANIITSVDEEARHSDQSTLEAEMLLEKKDVEADAESEIAERAEKLEEDLAELEAAGAKADARRKVQNAAEKEMQHIRERAEREIDRLEEIWQTFIKLAPKQMIRDEKLYDELVDRYEDYFTGGMGAESIQTLIRGFDLDAEAEELRTIINEGKGQKKMRALKRLKVVAAFQRSGNDPAGMVLNAIPVIPPELRPMVQLDGGRFATSDLNDLYRRVINRNNRLKRMIELGAPEIIVNNEKRMLQESVDALFDNGRRGRPVTGPGNRPLKSLSDLLKGKQGRFRQNLLGKRVDYSGRSVIIVGPQLRLHECGLPKLMALELFKPFVMKRLVENEYAQNIKSAKRMVERQRPEVWDVLEEAISEHPVMLNRAPTLHRLGIQAFEPVLVEGKAIQLHPLACEAFNADFDGDQMAVHLPLSAEAQAEARILMLASNNILSPASGKPLAMPRLDMVTGLYYLTLKKSPEEFGGQGAYQPADENGPEKGVYSSYAEAIMAYDRGVLGLQAPVRIRLDHLRPPAELENELFPEGWNQGDTWLAETTLGRVMFNEILPWNYPYLEGIMVRKGGGADKIMLGDVVNDLAARYPMITVAQTMDKMKDAGFYWSTRSGVTIAMSDVLVLPNKDEILDRYEAAARQIETKYNRGKLTGRERYDRLVELWKDATDEVGQAVEDIYPDDNPIPMIVKSGAAGNMRQIWTLAGMKGMVVNSKGDYITRPIKTSFREGLTVLEYFNNSHGSRKGLADTALRTADSGYLTRRLVDVAQDVIVRVEDCGTRQGVRVPVAAEVLDATGAVSGYTRHDLIETSVSGRVLAGDATNAEGEVILAAGSDLTELNIDLLVEAGIQQVKVRSVLTCQTPTGVCAKCYGKSMASGKQVDIGEAVGIVAAQSIGEPGTQLTMRTFHQGGVGGDITGGLPRVQELFEARVPKNLAPIASADGVIHLEDEGNFYTLTLVPDDGSDNVVYDKLSKRQGLASIRVPMEHNPAAFIERTLAEGDHVTVGTRLLRGAAAPHDVLEVLGRRGVEQHLIDEVQAVYRAQGVAIHDKHIEIIIRQMLRRGTVIESGSTEFLPGSLVDLSEAKLANSEAIANGGQPAELRSEIMGITKASLATESWLSAASFQETTRVLTDAAINKRSDKLIGLKENVIIGKLIPAGTGISRYRNISIKPTEAARNAAYSIPTYGESIYGDDGFGEFTGASVPLDEAF</sequence>
<dbReference type="EC" id="2.7.7.6" evidence="1"/>
<dbReference type="EMBL" id="BA000035">
    <property type="protein sequence ID" value="BAC17308.1"/>
    <property type="molecule type" value="Genomic_DNA"/>
</dbReference>
<dbReference type="RefSeq" id="WP_006770266.1">
    <property type="nucleotide sequence ID" value="NC_004369.1"/>
</dbReference>
<dbReference type="SMR" id="Q8FS96"/>
<dbReference type="STRING" id="196164.gene:10740900"/>
<dbReference type="KEGG" id="cef:CE0498"/>
<dbReference type="eggNOG" id="COG0086">
    <property type="taxonomic scope" value="Bacteria"/>
</dbReference>
<dbReference type="HOGENOM" id="CLU_000524_3_1_11"/>
<dbReference type="OrthoDB" id="9815296at2"/>
<dbReference type="Proteomes" id="UP000001409">
    <property type="component" value="Chromosome"/>
</dbReference>
<dbReference type="GO" id="GO:0000428">
    <property type="term" value="C:DNA-directed RNA polymerase complex"/>
    <property type="evidence" value="ECO:0007669"/>
    <property type="project" value="UniProtKB-KW"/>
</dbReference>
<dbReference type="GO" id="GO:0003677">
    <property type="term" value="F:DNA binding"/>
    <property type="evidence" value="ECO:0007669"/>
    <property type="project" value="UniProtKB-UniRule"/>
</dbReference>
<dbReference type="GO" id="GO:0003899">
    <property type="term" value="F:DNA-directed RNA polymerase activity"/>
    <property type="evidence" value="ECO:0007669"/>
    <property type="project" value="UniProtKB-UniRule"/>
</dbReference>
<dbReference type="GO" id="GO:0000287">
    <property type="term" value="F:magnesium ion binding"/>
    <property type="evidence" value="ECO:0007669"/>
    <property type="project" value="UniProtKB-UniRule"/>
</dbReference>
<dbReference type="GO" id="GO:0008270">
    <property type="term" value="F:zinc ion binding"/>
    <property type="evidence" value="ECO:0007669"/>
    <property type="project" value="UniProtKB-UniRule"/>
</dbReference>
<dbReference type="GO" id="GO:0006351">
    <property type="term" value="P:DNA-templated transcription"/>
    <property type="evidence" value="ECO:0007669"/>
    <property type="project" value="UniProtKB-UniRule"/>
</dbReference>
<dbReference type="CDD" id="cd02655">
    <property type="entry name" value="RNAP_beta'_C"/>
    <property type="match status" value="1"/>
</dbReference>
<dbReference type="CDD" id="cd01609">
    <property type="entry name" value="RNAP_beta'_N"/>
    <property type="match status" value="1"/>
</dbReference>
<dbReference type="FunFam" id="1.10.150.390:FF:000002">
    <property type="entry name" value="DNA-directed RNA polymerase subunit beta"/>
    <property type="match status" value="1"/>
</dbReference>
<dbReference type="FunFam" id="1.10.40.90:FF:000001">
    <property type="entry name" value="DNA-directed RNA polymerase subunit beta"/>
    <property type="match status" value="1"/>
</dbReference>
<dbReference type="FunFam" id="4.10.860.120:FF:000001">
    <property type="entry name" value="DNA-directed RNA polymerase subunit beta"/>
    <property type="match status" value="1"/>
</dbReference>
<dbReference type="Gene3D" id="1.10.132.30">
    <property type="match status" value="1"/>
</dbReference>
<dbReference type="Gene3D" id="1.10.150.390">
    <property type="match status" value="1"/>
</dbReference>
<dbReference type="Gene3D" id="1.10.1790.20">
    <property type="match status" value="1"/>
</dbReference>
<dbReference type="Gene3D" id="1.10.40.90">
    <property type="match status" value="1"/>
</dbReference>
<dbReference type="Gene3D" id="2.40.40.20">
    <property type="match status" value="1"/>
</dbReference>
<dbReference type="Gene3D" id="2.40.50.100">
    <property type="match status" value="1"/>
</dbReference>
<dbReference type="Gene3D" id="4.10.860.120">
    <property type="entry name" value="RNA polymerase II, clamp domain"/>
    <property type="match status" value="1"/>
</dbReference>
<dbReference type="Gene3D" id="1.10.274.100">
    <property type="entry name" value="RNA polymerase Rpb1, domain 3"/>
    <property type="match status" value="1"/>
</dbReference>
<dbReference type="HAMAP" id="MF_01322">
    <property type="entry name" value="RNApol_bact_RpoC"/>
    <property type="match status" value="1"/>
</dbReference>
<dbReference type="InterPro" id="IPR045867">
    <property type="entry name" value="DNA-dir_RpoC_beta_prime"/>
</dbReference>
<dbReference type="InterPro" id="IPR012754">
    <property type="entry name" value="DNA-dir_RpoC_beta_prime_bact"/>
</dbReference>
<dbReference type="InterPro" id="IPR000722">
    <property type="entry name" value="RNA_pol_asu"/>
</dbReference>
<dbReference type="InterPro" id="IPR006592">
    <property type="entry name" value="RNA_pol_N"/>
</dbReference>
<dbReference type="InterPro" id="IPR007080">
    <property type="entry name" value="RNA_pol_Rpb1_1"/>
</dbReference>
<dbReference type="InterPro" id="IPR007066">
    <property type="entry name" value="RNA_pol_Rpb1_3"/>
</dbReference>
<dbReference type="InterPro" id="IPR042102">
    <property type="entry name" value="RNA_pol_Rpb1_3_sf"/>
</dbReference>
<dbReference type="InterPro" id="IPR007083">
    <property type="entry name" value="RNA_pol_Rpb1_4"/>
</dbReference>
<dbReference type="InterPro" id="IPR007081">
    <property type="entry name" value="RNA_pol_Rpb1_5"/>
</dbReference>
<dbReference type="InterPro" id="IPR044893">
    <property type="entry name" value="RNA_pol_Rpb1_clamp_domain"/>
</dbReference>
<dbReference type="InterPro" id="IPR038120">
    <property type="entry name" value="Rpb1_funnel_sf"/>
</dbReference>
<dbReference type="NCBIfam" id="NF011498">
    <property type="entry name" value="PRK14906.1"/>
    <property type="match status" value="1"/>
</dbReference>
<dbReference type="NCBIfam" id="TIGR02386">
    <property type="entry name" value="rpoC_TIGR"/>
    <property type="match status" value="1"/>
</dbReference>
<dbReference type="PANTHER" id="PTHR19376">
    <property type="entry name" value="DNA-DIRECTED RNA POLYMERASE"/>
    <property type="match status" value="1"/>
</dbReference>
<dbReference type="PANTHER" id="PTHR19376:SF54">
    <property type="entry name" value="DNA-DIRECTED RNA POLYMERASE SUBUNIT BETA"/>
    <property type="match status" value="1"/>
</dbReference>
<dbReference type="Pfam" id="PF04997">
    <property type="entry name" value="RNA_pol_Rpb1_1"/>
    <property type="match status" value="1"/>
</dbReference>
<dbReference type="Pfam" id="PF00623">
    <property type="entry name" value="RNA_pol_Rpb1_2"/>
    <property type="match status" value="1"/>
</dbReference>
<dbReference type="Pfam" id="PF04983">
    <property type="entry name" value="RNA_pol_Rpb1_3"/>
    <property type="match status" value="1"/>
</dbReference>
<dbReference type="Pfam" id="PF05000">
    <property type="entry name" value="RNA_pol_Rpb1_4"/>
    <property type="match status" value="1"/>
</dbReference>
<dbReference type="Pfam" id="PF04998">
    <property type="entry name" value="RNA_pol_Rpb1_5"/>
    <property type="match status" value="1"/>
</dbReference>
<dbReference type="SMART" id="SM00663">
    <property type="entry name" value="RPOLA_N"/>
    <property type="match status" value="1"/>
</dbReference>
<dbReference type="SUPFAM" id="SSF64484">
    <property type="entry name" value="beta and beta-prime subunits of DNA dependent RNA-polymerase"/>
    <property type="match status" value="1"/>
</dbReference>
<protein>
    <recommendedName>
        <fullName evidence="1">DNA-directed RNA polymerase subunit beta'</fullName>
        <shortName evidence="1">RNAP subunit beta'</shortName>
        <ecNumber evidence="1">2.7.7.6</ecNumber>
    </recommendedName>
    <alternativeName>
        <fullName evidence="1">RNA polymerase subunit beta'</fullName>
    </alternativeName>
    <alternativeName>
        <fullName evidence="1">Transcriptase subunit beta'</fullName>
    </alternativeName>
</protein>